<accession>Q95748</accession>
<accession>A0A2P2CLF6</accession>
<accession>A7KNI3</accession>
<accession>P93279</accession>
<dbReference type="EC" id="7.1.1.2"/>
<dbReference type="EMBL" id="D82062">
    <property type="protein sequence ID" value="BAA11532.1"/>
    <property type="status" value="ALT_SEQ"/>
    <property type="molecule type" value="Genomic_DNA"/>
</dbReference>
<dbReference type="EMBL" id="Y08501">
    <property type="protein sequence ID" value="CAA69753.3"/>
    <property type="status" value="ALT_SEQ"/>
    <property type="molecule type" value="Genomic_DNA"/>
</dbReference>
<dbReference type="EMBL" id="BK010421">
    <property type="protein sequence ID" value="DAB41499.2"/>
    <property type="molecule type" value="Genomic_DNA"/>
</dbReference>
<dbReference type="EMBL" id="EF488926">
    <property type="protein sequence ID" value="ABS50638.1"/>
    <property type="molecule type" value="mRNA"/>
</dbReference>
<dbReference type="EMBL" id="EF488927">
    <property type="protein sequence ID" value="ABS50639.1"/>
    <property type="molecule type" value="mRNA"/>
</dbReference>
<dbReference type="RefSeq" id="NP_085479.1">
    <property type="nucleotide sequence ID" value="NC_001284.2"/>
</dbReference>
<dbReference type="PDB" id="7A23">
    <property type="method" value="EM"/>
    <property type="resolution" value="3.70 A"/>
    <property type="chains" value="F=1-190"/>
</dbReference>
<dbReference type="PDB" id="7A24">
    <property type="method" value="EM"/>
    <property type="resolution" value="3.80 A"/>
    <property type="chains" value="F=1-190"/>
</dbReference>
<dbReference type="PDB" id="7AQR">
    <property type="method" value="EM"/>
    <property type="resolution" value="2.91 A"/>
    <property type="chains" value="C=1-190"/>
</dbReference>
<dbReference type="PDB" id="7AR7">
    <property type="method" value="EM"/>
    <property type="resolution" value="3.72 A"/>
    <property type="chains" value="C=1-185"/>
</dbReference>
<dbReference type="PDB" id="7AR8">
    <property type="method" value="EM"/>
    <property type="resolution" value="3.53 A"/>
    <property type="chains" value="C=1-190"/>
</dbReference>
<dbReference type="PDB" id="7ARB">
    <property type="method" value="EM"/>
    <property type="resolution" value="3.41 A"/>
    <property type="chains" value="C=1-190"/>
</dbReference>
<dbReference type="PDB" id="8BEE">
    <property type="method" value="EM"/>
    <property type="resolution" value="2.04 A"/>
    <property type="chains" value="C=1-190"/>
</dbReference>
<dbReference type="PDB" id="8BPX">
    <property type="method" value="EM"/>
    <property type="resolution" value="2.09 A"/>
    <property type="chains" value="C=1-190"/>
</dbReference>
<dbReference type="PDB" id="8BQ5">
    <property type="method" value="EM"/>
    <property type="resolution" value="2.73 A"/>
    <property type="chains" value="C=1-190"/>
</dbReference>
<dbReference type="PDB" id="8BQ6">
    <property type="method" value="EM"/>
    <property type="resolution" value="2.80 A"/>
    <property type="chains" value="C=1-190"/>
</dbReference>
<dbReference type="PDBsum" id="7A23"/>
<dbReference type="PDBsum" id="7A24"/>
<dbReference type="PDBsum" id="7AQR"/>
<dbReference type="PDBsum" id="7AR7"/>
<dbReference type="PDBsum" id="7AR8"/>
<dbReference type="PDBsum" id="7ARB"/>
<dbReference type="PDBsum" id="8BEE"/>
<dbReference type="PDBsum" id="8BPX"/>
<dbReference type="PDBsum" id="8BQ5"/>
<dbReference type="PDBsum" id="8BQ6"/>
<dbReference type="EMDB" id="EMD-11873"/>
<dbReference type="EMDB" id="EMD-11875"/>
<dbReference type="EMDB" id="EMD-11876"/>
<dbReference type="EMDB" id="EMD-11878"/>
<dbReference type="EMDB" id="EMD-15999"/>
<dbReference type="EMDB" id="EMD-16168"/>
<dbReference type="EMDB" id="EMD-16171"/>
<dbReference type="EMDB" id="EMD-16172"/>
<dbReference type="SMR" id="Q95748"/>
<dbReference type="BioGRID" id="2">
    <property type="interactions" value="8"/>
</dbReference>
<dbReference type="FunCoup" id="Q95748">
    <property type="interactions" value="2400"/>
</dbReference>
<dbReference type="IntAct" id="Q95748">
    <property type="interactions" value="4"/>
</dbReference>
<dbReference type="STRING" id="3702.A0A2P2CLF6"/>
<dbReference type="TCDB" id="3.D.1.6.3">
    <property type="family name" value="the h+ or na+-translocating nadh dehydrogenase (ndh) family"/>
</dbReference>
<dbReference type="PaxDb" id="3702-ATMG00070.1"/>
<dbReference type="Araport" id="ATMG00070"/>
<dbReference type="TAIR" id="ATMG00070"/>
<dbReference type="eggNOG" id="KOG1713">
    <property type="taxonomic scope" value="Eukaryota"/>
</dbReference>
<dbReference type="HOGENOM" id="CLU_042628_2_3_1"/>
<dbReference type="InParanoid" id="Q95748"/>
<dbReference type="BioCyc" id="ARA:ATMG00070-MONOMER"/>
<dbReference type="BioCyc" id="MetaCyc:ATMG00070-MONOMER"/>
<dbReference type="PRO" id="PR:Q95748"/>
<dbReference type="Proteomes" id="UP000006548">
    <property type="component" value="Mitochondrion MT"/>
</dbReference>
<dbReference type="ExpressionAtlas" id="Q95748">
    <property type="expression patterns" value="baseline and differential"/>
</dbReference>
<dbReference type="GO" id="GO:0005743">
    <property type="term" value="C:mitochondrial inner membrane"/>
    <property type="evidence" value="ECO:0007669"/>
    <property type="project" value="UniProtKB-SubCell"/>
</dbReference>
<dbReference type="GO" id="GO:0045271">
    <property type="term" value="C:respiratory chain complex I"/>
    <property type="evidence" value="ECO:0000318"/>
    <property type="project" value="GO_Central"/>
</dbReference>
<dbReference type="GO" id="GO:0008137">
    <property type="term" value="F:NADH dehydrogenase (ubiquinone) activity"/>
    <property type="evidence" value="ECO:0007669"/>
    <property type="project" value="UniProtKB-EC"/>
</dbReference>
<dbReference type="FunFam" id="3.30.460.80:FF:000005">
    <property type="entry name" value="NADH dehydrogenase subunit 9"/>
    <property type="match status" value="1"/>
</dbReference>
<dbReference type="Gene3D" id="3.30.460.80">
    <property type="entry name" value="NADH:ubiquinone oxidoreductase, 30kDa subunit"/>
    <property type="match status" value="1"/>
</dbReference>
<dbReference type="HAMAP" id="MF_01357">
    <property type="entry name" value="NDH1_NuoC"/>
    <property type="match status" value="1"/>
</dbReference>
<dbReference type="InterPro" id="IPR010218">
    <property type="entry name" value="NADH_DH_suC"/>
</dbReference>
<dbReference type="InterPro" id="IPR037232">
    <property type="entry name" value="NADH_quin_OxRdtase_su_C/D-like"/>
</dbReference>
<dbReference type="InterPro" id="IPR001268">
    <property type="entry name" value="NADH_UbQ_OxRdtase_30kDa_su"/>
</dbReference>
<dbReference type="InterPro" id="IPR020396">
    <property type="entry name" value="NADH_UbQ_OxRdtase_CS"/>
</dbReference>
<dbReference type="NCBIfam" id="TIGR01961">
    <property type="entry name" value="NuoC_fam"/>
    <property type="match status" value="1"/>
</dbReference>
<dbReference type="NCBIfam" id="NF004733">
    <property type="entry name" value="PRK06074.1-5"/>
    <property type="match status" value="1"/>
</dbReference>
<dbReference type="PANTHER" id="PTHR10884:SF14">
    <property type="entry name" value="NADH DEHYDROGENASE [UBIQUINONE] IRON-SULFUR PROTEIN 3, MITOCHONDRIAL"/>
    <property type="match status" value="1"/>
</dbReference>
<dbReference type="PANTHER" id="PTHR10884">
    <property type="entry name" value="NADH DEHYDROGENASE UBIQUINONE IRON-SULFUR PROTEIN 3"/>
    <property type="match status" value="1"/>
</dbReference>
<dbReference type="Pfam" id="PF00329">
    <property type="entry name" value="Complex1_30kDa"/>
    <property type="match status" value="1"/>
</dbReference>
<dbReference type="SUPFAM" id="SSF143243">
    <property type="entry name" value="Nqo5-like"/>
    <property type="match status" value="1"/>
</dbReference>
<dbReference type="PROSITE" id="PS00542">
    <property type="entry name" value="COMPLEX1_30K"/>
    <property type="match status" value="1"/>
</dbReference>
<reference key="1">
    <citation type="journal article" date="1996" name="Plant Cell">
        <title>Altered mitochondrial gene expression in a maternal distorted leaf mutant of Arabidopsis induced by chloroplast mutator.</title>
        <authorList>
            <person name="Sakamoto W."/>
            <person name="Kondo H."/>
            <person name="Murata M."/>
            <person name="Motoyoshi F."/>
        </authorList>
    </citation>
    <scope>NUCLEOTIDE SEQUENCE [GENOMIC DNA]</scope>
    <source>
        <strain>cv. Landsberg erecta</strain>
    </source>
</reference>
<reference key="2">
    <citation type="journal article" date="1997" name="Nat. Genet.">
        <title>The mitochondrial genome of Arabidopsis thaliana contains 57 genes in 366,924 nucleotides.</title>
        <authorList>
            <person name="Unseld M."/>
            <person name="Marienfeld J.R."/>
            <person name="Brandt P."/>
            <person name="Brennicke A."/>
        </authorList>
    </citation>
    <scope>NUCLEOTIDE SEQUENCE [LARGE SCALE GENOMIC DNA]</scope>
    <source>
        <strain>cv. C24</strain>
    </source>
</reference>
<reference key="3">
    <citation type="journal article" date="1999" name="Proc. Natl. Acad. Sci. U.S.A.">
        <title>RNA editing in Arabidopsis mitochondria effects 441 C to U changes in ORFs.</title>
        <authorList>
            <person name="Giege P."/>
            <person name="Brennicke A."/>
        </authorList>
    </citation>
    <scope>NUCLEOTIDE SEQUENCE [GENOMIC DNA]</scope>
    <scope>RNA EDITING</scope>
</reference>
<reference key="4">
    <citation type="journal article" date="2018" name="Plant Cell">
        <title>Correction of persistent errors in Arabidopsis reference mitochondrial genomes.</title>
        <authorList>
            <person name="Sloan D.B."/>
            <person name="Wu Z."/>
            <person name="Sharbrough J."/>
        </authorList>
    </citation>
    <scope>NUCLEOTIDE SEQUENCE [LARGE SCALE GENOMIC DNA]</scope>
    <scope>RNA EDITING</scope>
    <source>
        <strain>cv. Columbia</strain>
    </source>
</reference>
<reference key="5">
    <citation type="journal article" date="2008" name="Genetics">
        <title>Genetic architecture of mitochondrial editing in Arabidopsis thaliana.</title>
        <authorList>
            <person name="Bentolila S."/>
            <person name="Elliott L.E."/>
            <person name="Hanson M.R."/>
        </authorList>
    </citation>
    <scope>NUCLEOTIDE SEQUENCE [MRNA] OF 9-184</scope>
    <scope>RNA EDITING</scope>
    <source>
        <strain>cv. Columbia</strain>
        <strain>cv. Landsberg erecta</strain>
        <tissue>Rosette leaf</tissue>
    </source>
</reference>
<reference key="6">
    <citation type="journal article" date="2004" name="Plant Cell">
        <title>Experimental analysis of the Arabidopsis mitochondrial proteome highlights signaling and regulatory components, provides assessment of targeting prediction programs, and indicates plant-specific mitochondrial proteins.</title>
        <authorList>
            <person name="Heazlewood J.L."/>
            <person name="Tonti-Filippini J.S."/>
            <person name="Gout A.M."/>
            <person name="Day D.A."/>
            <person name="Whelan J."/>
            <person name="Millar A.H."/>
        </authorList>
    </citation>
    <scope>IDENTIFICATION BY MASS SPECTROMETRY</scope>
    <scope>SUBCELLULAR LOCATION [LARGE SCALE ANALYSIS]</scope>
    <source>
        <strain>cv. Landsberg erecta</strain>
    </source>
</reference>
<proteinExistence type="evidence at protein level"/>
<name>NDUS3_ARATH</name>
<keyword id="KW-0002">3D-structure</keyword>
<keyword id="KW-0249">Electron transport</keyword>
<keyword id="KW-0472">Membrane</keyword>
<keyword id="KW-0496">Mitochondrion</keyword>
<keyword id="KW-0999">Mitochondrion inner membrane</keyword>
<keyword id="KW-0520">NAD</keyword>
<keyword id="KW-0560">Oxidoreductase</keyword>
<keyword id="KW-1185">Reference proteome</keyword>
<keyword id="KW-0679">Respiratory chain</keyword>
<keyword id="KW-0691">RNA editing</keyword>
<keyword id="KW-1278">Translocase</keyword>
<keyword id="KW-0813">Transport</keyword>
<keyword id="KW-0830">Ubiquinone</keyword>
<protein>
    <recommendedName>
        <fullName>NADH dehydrogenase [ubiquinone] iron-sulfur protein 3</fullName>
        <ecNumber>7.1.1.2</ecNumber>
    </recommendedName>
    <alternativeName>
        <fullName>NADH dehydrogenase subunit 9</fullName>
    </alternativeName>
</protein>
<feature type="chain" id="PRO_0000118637" description="NADH dehydrogenase [ubiquinone] iron-sulfur protein 3">
    <location>
        <begin position="1"/>
        <end position="190"/>
    </location>
</feature>
<feature type="sequence conflict" description="In Ref. 1; BAA11532." evidence="6" ref="1">
    <original>R</original>
    <variation>P</variation>
    <location>
        <position position="130"/>
    </location>
</feature>
<feature type="sequence conflict" description="In Ref. 1; BAA11532 and 2; CAA69753." evidence="6" ref="1 2">
    <original>E</original>
    <variation>Q</variation>
    <location>
        <position position="154"/>
    </location>
</feature>
<feature type="helix" evidence="8">
    <location>
        <begin position="3"/>
        <end position="13"/>
    </location>
</feature>
<feature type="helix" evidence="8">
    <location>
        <begin position="16"/>
        <end position="18"/>
    </location>
</feature>
<feature type="strand" evidence="8">
    <location>
        <begin position="20"/>
        <end position="25"/>
    </location>
</feature>
<feature type="strand" evidence="8">
    <location>
        <begin position="30"/>
        <end position="32"/>
    </location>
</feature>
<feature type="helix" evidence="8">
    <location>
        <begin position="35"/>
        <end position="37"/>
    </location>
</feature>
<feature type="helix" evidence="8">
    <location>
        <begin position="38"/>
        <end position="47"/>
    </location>
</feature>
<feature type="turn" evidence="8">
    <location>
        <begin position="49"/>
        <end position="51"/>
    </location>
</feature>
<feature type="strand" evidence="8">
    <location>
        <begin position="55"/>
        <end position="63"/>
    </location>
</feature>
<feature type="strand" evidence="8">
    <location>
        <begin position="67"/>
        <end position="69"/>
    </location>
</feature>
<feature type="strand" evidence="8">
    <location>
        <begin position="71"/>
        <end position="79"/>
    </location>
</feature>
<feature type="turn" evidence="8">
    <location>
        <begin position="80"/>
        <end position="83"/>
    </location>
</feature>
<feature type="strand" evidence="8">
    <location>
        <begin position="84"/>
        <end position="92"/>
    </location>
</feature>
<feature type="strand" evidence="7">
    <location>
        <begin position="97"/>
        <end position="99"/>
    </location>
</feature>
<feature type="turn" evidence="8">
    <location>
        <begin position="102"/>
        <end position="104"/>
    </location>
</feature>
<feature type="helix" evidence="8">
    <location>
        <begin position="108"/>
        <end position="119"/>
    </location>
</feature>
<feature type="strand" evidence="7">
    <location>
        <begin position="122"/>
        <end position="124"/>
    </location>
</feature>
<feature type="strand" evidence="8">
    <location>
        <begin position="132"/>
        <end position="134"/>
    </location>
</feature>
<feature type="strand" evidence="8">
    <location>
        <begin position="152"/>
        <end position="158"/>
    </location>
</feature>
<feature type="turn" evidence="8">
    <location>
        <begin position="159"/>
        <end position="162"/>
    </location>
</feature>
<feature type="strand" evidence="8">
    <location>
        <begin position="163"/>
        <end position="168"/>
    </location>
</feature>
<feature type="strand" evidence="7">
    <location>
        <begin position="171"/>
        <end position="173"/>
    </location>
</feature>
<sequence>MDNQFIFKYSWETLPKKWVKKMERSEHGNRFDTNTDYLFQLLCFLKLHTYTRVQVLIDICGVDYPSRKRRFEVVYNLLSTRYNSRIRVQTSADEVTRISSVVSLFPSAGWWEREVWDMFGVSFINHPDLRRILTDYGFEGHPLRKDFPLSGYVEVRYDDPEKRVVSEPIEMTQEFRYFDFASPWEQRSDG</sequence>
<geneLocation type="mitochondrion"/>
<evidence type="ECO:0000250" key="1"/>
<evidence type="ECO:0000269" key="2">
    <source>
    </source>
</evidence>
<evidence type="ECO:0000269" key="3">
    <source>
    </source>
</evidence>
<evidence type="ECO:0000269" key="4">
    <source>
    </source>
</evidence>
<evidence type="ECO:0000269" key="5">
    <source>
    </source>
</evidence>
<evidence type="ECO:0000305" key="6"/>
<evidence type="ECO:0007829" key="7">
    <source>
        <dbReference type="PDB" id="7AQR"/>
    </source>
</evidence>
<evidence type="ECO:0007829" key="8">
    <source>
        <dbReference type="PDB" id="8BEE"/>
    </source>
</evidence>
<comment type="function">
    <text evidence="1">Core subunit of the mitochondrial membrane respiratory chain NADH dehydrogenase (Complex I) that is believed to belong to the minimal assembly required for catalysis. Complex I functions in the transfer of electrons from NADH to the respiratory chain. The immediate electron acceptor for the enzyme is believed to be ubiquinone (By similarity).</text>
</comment>
<comment type="catalytic activity">
    <reaction>
        <text>a ubiquinone + NADH + 5 H(+)(in) = a ubiquinol + NAD(+) + 4 H(+)(out)</text>
        <dbReference type="Rhea" id="RHEA:29091"/>
        <dbReference type="Rhea" id="RHEA-COMP:9565"/>
        <dbReference type="Rhea" id="RHEA-COMP:9566"/>
        <dbReference type="ChEBI" id="CHEBI:15378"/>
        <dbReference type="ChEBI" id="CHEBI:16389"/>
        <dbReference type="ChEBI" id="CHEBI:17976"/>
        <dbReference type="ChEBI" id="CHEBI:57540"/>
        <dbReference type="ChEBI" id="CHEBI:57945"/>
        <dbReference type="EC" id="7.1.1.2"/>
    </reaction>
</comment>
<comment type="subunit">
    <text>Complex I is composed of at least 49 different subunits. This is a component of the iron-sulfur (IP) fragment of the enzyme.</text>
</comment>
<comment type="subcellular location">
    <subcellularLocation>
        <location evidence="3">Mitochondrion inner membrane</location>
        <topology evidence="3">Peripheral membrane protein</topology>
        <orientation evidence="3">Matrix side</orientation>
    </subcellularLocation>
</comment>
<comment type="RNA editing">
    <location>
        <position position="31" evidence="2 4 5"/>
    </location>
    <location>
        <position position="56" evidence="2 4 5"/>
    </location>
    <location>
        <position position="64" evidence="2 4 5"/>
    </location>
    <location>
        <position position="100" evidence="2 4 5"/>
    </location>
    <location>
        <position position="110" evidence="2 4 5"/>
    </location>
    <location>
        <position position="133" evidence="2 4 5"/>
    </location>
    <location>
        <position position="147" evidence="2 4 5"/>
    </location>
</comment>
<comment type="similarity">
    <text evidence="6">Belongs to the complex I 30 kDa subunit family.</text>
</comment>
<gene>
    <name type="primary">NAD9</name>
    <name type="ordered locus">AtMg00070</name>
</gene>
<organism>
    <name type="scientific">Arabidopsis thaliana</name>
    <name type="common">Mouse-ear cress</name>
    <dbReference type="NCBI Taxonomy" id="3702"/>
    <lineage>
        <taxon>Eukaryota</taxon>
        <taxon>Viridiplantae</taxon>
        <taxon>Streptophyta</taxon>
        <taxon>Embryophyta</taxon>
        <taxon>Tracheophyta</taxon>
        <taxon>Spermatophyta</taxon>
        <taxon>Magnoliopsida</taxon>
        <taxon>eudicotyledons</taxon>
        <taxon>Gunneridae</taxon>
        <taxon>Pentapetalae</taxon>
        <taxon>rosids</taxon>
        <taxon>malvids</taxon>
        <taxon>Brassicales</taxon>
        <taxon>Brassicaceae</taxon>
        <taxon>Camelineae</taxon>
        <taxon>Arabidopsis</taxon>
    </lineage>
</organism>